<gene>
    <name type="primary">yobH</name>
    <name type="ordered locus">UTI89_C2027</name>
</gene>
<evidence type="ECO:0000255" key="1"/>
<proteinExistence type="inferred from homology"/>
<dbReference type="EMBL" id="CP000243">
    <property type="protein sequence ID" value="ABE07503.1"/>
    <property type="molecule type" value="Genomic_DNA"/>
</dbReference>
<dbReference type="RefSeq" id="WP_001211011.1">
    <property type="nucleotide sequence ID" value="NZ_CP064825.1"/>
</dbReference>
<dbReference type="KEGG" id="eci:UTI89_C2027"/>
<dbReference type="HOGENOM" id="CLU_179882_0_0_6"/>
<dbReference type="Proteomes" id="UP000001952">
    <property type="component" value="Chromosome"/>
</dbReference>
<dbReference type="InterPro" id="IPR025611">
    <property type="entry name" value="YobH"/>
</dbReference>
<dbReference type="Pfam" id="PF13996">
    <property type="entry name" value="YobH"/>
    <property type="match status" value="1"/>
</dbReference>
<organism>
    <name type="scientific">Escherichia coli (strain UTI89 / UPEC)</name>
    <dbReference type="NCBI Taxonomy" id="364106"/>
    <lineage>
        <taxon>Bacteria</taxon>
        <taxon>Pseudomonadati</taxon>
        <taxon>Pseudomonadota</taxon>
        <taxon>Gammaproteobacteria</taxon>
        <taxon>Enterobacterales</taxon>
        <taxon>Enterobacteriaceae</taxon>
        <taxon>Escherichia</taxon>
    </lineage>
</organism>
<reference key="1">
    <citation type="journal article" date="2006" name="Proc. Natl. Acad. Sci. U.S.A.">
        <title>Identification of genes subject to positive selection in uropathogenic strains of Escherichia coli: a comparative genomics approach.</title>
        <authorList>
            <person name="Chen S.L."/>
            <person name="Hung C.-S."/>
            <person name="Xu J."/>
            <person name="Reigstad C.S."/>
            <person name="Magrini V."/>
            <person name="Sabo A."/>
            <person name="Blasiar D."/>
            <person name="Bieri T."/>
            <person name="Meyer R.R."/>
            <person name="Ozersky P."/>
            <person name="Armstrong J.R."/>
            <person name="Fulton R.S."/>
            <person name="Latreille J.P."/>
            <person name="Spieth J."/>
            <person name="Hooton T.M."/>
            <person name="Mardis E.R."/>
            <person name="Hultgren S.J."/>
            <person name="Gordon J.I."/>
        </authorList>
    </citation>
    <scope>NUCLEOTIDE SEQUENCE [LARGE SCALE GENOMIC DNA]</scope>
    <source>
        <strain>UTI89 / UPEC</strain>
    </source>
</reference>
<feature type="signal peptide" evidence="1">
    <location>
        <begin position="1"/>
        <end position="33"/>
    </location>
</feature>
<feature type="chain" id="PRO_0000259704" description="Uncharacterized protein YobH">
    <location>
        <begin position="34"/>
        <end position="79"/>
    </location>
</feature>
<accession>Q1RAW1</accession>
<protein>
    <recommendedName>
        <fullName>Uncharacterized protein YobH</fullName>
    </recommendedName>
</protein>
<sequence>MRFIIRTVMLIALVWIGLLLSGYGVLIGSKENAAGLGLQCTYLTARGTSTVQYLHTKSGFLGITDCPLLRKSNIVVDNG</sequence>
<keyword id="KW-0732">Signal</keyword>
<name>YOBH_ECOUT</name>